<feature type="signal peptide" description="Tat-type signal" evidence="3">
    <location>
        <begin position="1"/>
        <end position="34"/>
    </location>
</feature>
<feature type="propeptide" id="PRO_0000026913" evidence="2">
    <location>
        <begin position="35"/>
        <end position="202"/>
    </location>
</feature>
<feature type="chain" id="PRO_0000026914" description="Streptogrisin-C">
    <location>
        <begin position="203"/>
        <end position="457"/>
    </location>
</feature>
<feature type="domain" description="Chitin-binding type-3">
    <location>
        <begin position="415"/>
        <end position="457"/>
    </location>
</feature>
<feature type="region of interest" description="Catalytic">
    <location>
        <begin position="203"/>
        <end position="393"/>
    </location>
</feature>
<feature type="region of interest" description="Disordered" evidence="4">
    <location>
        <begin position="393"/>
        <end position="412"/>
    </location>
</feature>
<feature type="region of interest" description="Linker">
    <location>
        <begin position="394"/>
        <end position="413"/>
    </location>
</feature>
<feature type="compositionally biased region" description="Pro residues" evidence="4">
    <location>
        <begin position="399"/>
        <end position="408"/>
    </location>
</feature>
<feature type="active site" description="Charge relay system">
    <location>
        <position position="238"/>
    </location>
</feature>
<feature type="active site" description="Charge relay system">
    <location>
        <position position="266"/>
    </location>
</feature>
<feature type="active site" description="Charge relay system">
    <location>
        <position position="347"/>
    </location>
</feature>
<feature type="disulfide bond" evidence="1">
    <location>
        <begin position="219"/>
        <end position="239"/>
    </location>
</feature>
<feature type="disulfide bond" evidence="1">
    <location>
        <begin position="305"/>
        <end position="315"/>
    </location>
</feature>
<feature type="disulfide bond" evidence="1">
    <location>
        <begin position="341"/>
        <end position="368"/>
    </location>
</feature>
<gene>
    <name type="primary">sprC</name>
</gene>
<proteinExistence type="inferred from homology"/>
<keyword id="KW-1015">Disulfide bond</keyword>
<keyword id="KW-0378">Hydrolase</keyword>
<keyword id="KW-0645">Protease</keyword>
<keyword id="KW-0720">Serine protease</keyword>
<keyword id="KW-0732">Signal</keyword>
<keyword id="KW-0865">Zymogen</keyword>
<evidence type="ECO:0000250" key="1"/>
<evidence type="ECO:0000255" key="2"/>
<evidence type="ECO:0000255" key="3">
    <source>
        <dbReference type="PROSITE-ProRule" id="PRU00648"/>
    </source>
</evidence>
<evidence type="ECO:0000256" key="4">
    <source>
        <dbReference type="SAM" id="MobiDB-lite"/>
    </source>
</evidence>
<evidence type="ECO:0000305" key="5"/>
<sequence length="457" mass="46029">MERTTLRRRALVAGTATVAVGALALAGLTGVASADPAATAAPPVSADSLSPGMLAALERDLGLDEDAARSRIANEYRAAAVAAGLEKSLGARYAGARVSGAKATLTVATTDASEAARITEAGARAEVVGHSLDRFEGVKKSLDKAALDKAPKNVPVWYVDVAANRVVVNAASPAAGQAFLKVAGVDRGLVTVARSAEQPRALADIRGGDAYYMNGSGRCSVGFSVTRGTQNGFATAGHCGRVGTTTNGVNQQAQGTFQGSTFPGRDIAWVATNANWTPRPLVNGYGRGDVTVAGSTASVVGASVCRSGSTTGWHCGTIQQLNTSVTYPEGTISGVTRTSVCAEPGDSGGSYISGSQAQGVTSGGSGNCSSGGTTYFQPINPLLQAYGLTLVTSGGGTPTDPPTTPPTDSPGGTWAVGTAYAAGATVTYGGATYRCLQAHTAQPGWTPADVPALWQRV</sequence>
<comment type="function">
    <text>Hydrolysis of proteins with specificity similar to chymotrypsin. May be specialized for the degradation of chitin-linked proteins. Has a primary specificity for large aliphatic or aromatic amino acids.</text>
</comment>
<comment type="subunit">
    <text evidence="5">Monomer.</text>
</comment>
<comment type="PTM">
    <text>Predicted to be exported by the Tat system. The position of the signal peptide cleavage has not been experimentally proven.</text>
</comment>
<comment type="similarity">
    <text evidence="5">Belongs to the peptidase S1 family.</text>
</comment>
<protein>
    <recommendedName>
        <fullName>Streptogrisin-C</fullName>
        <ecNumber>3.4.21.-</ecNumber>
    </recommendedName>
    <alternativeName>
        <fullName>SGPC</fullName>
    </alternativeName>
    <alternativeName>
        <fullName>Serine protease C</fullName>
    </alternativeName>
</protein>
<name>PRTC_STRGR</name>
<dbReference type="EC" id="3.4.21.-"/>
<dbReference type="EMBL" id="L29018">
    <property type="protein sequence ID" value="AAA26813.1"/>
    <property type="molecule type" value="Genomic_DNA"/>
</dbReference>
<dbReference type="PIR" id="A53669">
    <property type="entry name" value="A53669"/>
</dbReference>
<dbReference type="SMR" id="P52320"/>
<dbReference type="CAZy" id="CBM12">
    <property type="family name" value="Carbohydrate-Binding Module Family 12"/>
</dbReference>
<dbReference type="MEROPS" id="S01.265"/>
<dbReference type="GO" id="GO:0005576">
    <property type="term" value="C:extracellular region"/>
    <property type="evidence" value="ECO:0007669"/>
    <property type="project" value="InterPro"/>
</dbReference>
<dbReference type="GO" id="GO:0030246">
    <property type="term" value="F:carbohydrate binding"/>
    <property type="evidence" value="ECO:0007669"/>
    <property type="project" value="InterPro"/>
</dbReference>
<dbReference type="GO" id="GO:0004553">
    <property type="term" value="F:hydrolase activity, hydrolyzing O-glycosyl compounds"/>
    <property type="evidence" value="ECO:0007669"/>
    <property type="project" value="InterPro"/>
</dbReference>
<dbReference type="GO" id="GO:0004252">
    <property type="term" value="F:serine-type endopeptidase activity"/>
    <property type="evidence" value="ECO:0007669"/>
    <property type="project" value="InterPro"/>
</dbReference>
<dbReference type="GO" id="GO:0005975">
    <property type="term" value="P:carbohydrate metabolic process"/>
    <property type="evidence" value="ECO:0007669"/>
    <property type="project" value="InterPro"/>
</dbReference>
<dbReference type="GO" id="GO:0006508">
    <property type="term" value="P:proteolysis"/>
    <property type="evidence" value="ECO:0007669"/>
    <property type="project" value="UniProtKB-KW"/>
</dbReference>
<dbReference type="CDD" id="cd21112">
    <property type="entry name" value="alphaLP-like"/>
    <property type="match status" value="1"/>
</dbReference>
<dbReference type="CDD" id="cd12214">
    <property type="entry name" value="ChiA1_BD"/>
    <property type="match status" value="1"/>
</dbReference>
<dbReference type="Gene3D" id="3.30.300.50">
    <property type="match status" value="2"/>
</dbReference>
<dbReference type="Gene3D" id="2.10.10.20">
    <property type="entry name" value="Carbohydrate-binding module superfamily 5/12"/>
    <property type="match status" value="1"/>
</dbReference>
<dbReference type="Gene3D" id="2.40.10.10">
    <property type="entry name" value="Trypsin-like serine proteases"/>
    <property type="match status" value="2"/>
</dbReference>
<dbReference type="InterPro" id="IPR003610">
    <property type="entry name" value="CBM5/12"/>
</dbReference>
<dbReference type="InterPro" id="IPR036573">
    <property type="entry name" value="CBM_sf_5/12"/>
</dbReference>
<dbReference type="InterPro" id="IPR004236">
    <property type="entry name" value="Pept_S1_alpha_lytic"/>
</dbReference>
<dbReference type="InterPro" id="IPR001316">
    <property type="entry name" value="Pept_S1A_streptogrisin"/>
</dbReference>
<dbReference type="InterPro" id="IPR009003">
    <property type="entry name" value="Peptidase_S1_PA"/>
</dbReference>
<dbReference type="InterPro" id="IPR043504">
    <property type="entry name" value="Peptidase_S1_PA_chymotrypsin"/>
</dbReference>
<dbReference type="InterPro" id="IPR035070">
    <property type="entry name" value="Streptogrisin_prodomain"/>
</dbReference>
<dbReference type="InterPro" id="IPR006311">
    <property type="entry name" value="TAT_signal"/>
</dbReference>
<dbReference type="InterPro" id="IPR033116">
    <property type="entry name" value="TRYPSIN_SER"/>
</dbReference>
<dbReference type="Pfam" id="PF02839">
    <property type="entry name" value="CBM_5_12"/>
    <property type="match status" value="1"/>
</dbReference>
<dbReference type="Pfam" id="PF02983">
    <property type="entry name" value="Pro_Al_protease"/>
    <property type="match status" value="1"/>
</dbReference>
<dbReference type="PIRSF" id="PIRSF001134">
    <property type="entry name" value="Streptogrisin"/>
    <property type="match status" value="1"/>
</dbReference>
<dbReference type="PRINTS" id="PR00861">
    <property type="entry name" value="ALYTICPTASE"/>
</dbReference>
<dbReference type="SMART" id="SM00495">
    <property type="entry name" value="ChtBD3"/>
    <property type="match status" value="1"/>
</dbReference>
<dbReference type="SUPFAM" id="SSF51055">
    <property type="entry name" value="Carbohydrate binding domain"/>
    <property type="match status" value="1"/>
</dbReference>
<dbReference type="SUPFAM" id="SSF50494">
    <property type="entry name" value="Trypsin-like serine proteases"/>
    <property type="match status" value="1"/>
</dbReference>
<dbReference type="PROSITE" id="PS51318">
    <property type="entry name" value="TAT"/>
    <property type="match status" value="1"/>
</dbReference>
<dbReference type="PROSITE" id="PS00135">
    <property type="entry name" value="TRYPSIN_SER"/>
    <property type="match status" value="1"/>
</dbReference>
<accession>P52320</accession>
<organism>
    <name type="scientific">Streptomyces griseus</name>
    <dbReference type="NCBI Taxonomy" id="1911"/>
    <lineage>
        <taxon>Bacteria</taxon>
        <taxon>Bacillati</taxon>
        <taxon>Actinomycetota</taxon>
        <taxon>Actinomycetes</taxon>
        <taxon>Kitasatosporales</taxon>
        <taxon>Streptomycetaceae</taxon>
        <taxon>Streptomyces</taxon>
    </lineage>
</organism>
<reference key="1">
    <citation type="journal article" date="1994" name="J. Biol. Chem.">
        <title>Streptomyces griseus protease C. A novel enzyme of the chymotrypsin superfamily.</title>
        <authorList>
            <person name="Sidhu S.S."/>
            <person name="Kalmar G.B."/>
            <person name="Willis L.G."/>
            <person name="Borgford T.J."/>
        </authorList>
    </citation>
    <scope>NUCLEOTIDE SEQUENCE [GENOMIC DNA]</scope>
    <source>
        <strain>IMRU 3499</strain>
    </source>
</reference>